<sequence length="252" mass="29000">MSDWNPSLYLHFSAERSRPAVELLARVPLENVEYVADLGCGPGNSTALLHQRWPAARITGIDSSPAMIAEARSALPDCQFVEADIRNWQPEQALDLIFANASLQWLPDHYELFPHLVSLLNPQGVLAVQMPDNWLEPTHVLMREVAWEQNYPDRGREPLAGVHAYYDILSEAGCEVDIWRITYYHQMPSHQAIIDWVTATGLRPWLQDLTESEQQLFLTRYHQMLEEQYPLQENGQILLAFPRLFIVARRTE</sequence>
<proteinExistence type="inferred from homology"/>
<name>TAM_SHIF8</name>
<organism>
    <name type="scientific">Shigella flexneri serotype 5b (strain 8401)</name>
    <dbReference type="NCBI Taxonomy" id="373384"/>
    <lineage>
        <taxon>Bacteria</taxon>
        <taxon>Pseudomonadati</taxon>
        <taxon>Pseudomonadota</taxon>
        <taxon>Gammaproteobacteria</taxon>
        <taxon>Enterobacterales</taxon>
        <taxon>Enterobacteriaceae</taxon>
        <taxon>Shigella</taxon>
    </lineage>
</organism>
<dbReference type="EC" id="2.1.1.144" evidence="1"/>
<dbReference type="EMBL" id="CP000266">
    <property type="protein sequence ID" value="ABF03753.1"/>
    <property type="molecule type" value="Genomic_DNA"/>
</dbReference>
<dbReference type="RefSeq" id="WP_001286594.1">
    <property type="nucleotide sequence ID" value="NC_008258.1"/>
</dbReference>
<dbReference type="SMR" id="Q0T4L2"/>
<dbReference type="KEGG" id="sfv:SFV_1576"/>
<dbReference type="HOGENOM" id="CLU_037990_5_2_6"/>
<dbReference type="Proteomes" id="UP000000659">
    <property type="component" value="Chromosome"/>
</dbReference>
<dbReference type="GO" id="GO:0005737">
    <property type="term" value="C:cytoplasm"/>
    <property type="evidence" value="ECO:0007669"/>
    <property type="project" value="UniProtKB-SubCell"/>
</dbReference>
<dbReference type="GO" id="GO:0030798">
    <property type="term" value="F:trans-aconitate 2-methyltransferase activity"/>
    <property type="evidence" value="ECO:0007669"/>
    <property type="project" value="UniProtKB-UniRule"/>
</dbReference>
<dbReference type="GO" id="GO:0032259">
    <property type="term" value="P:methylation"/>
    <property type="evidence" value="ECO:0007669"/>
    <property type="project" value="UniProtKB-KW"/>
</dbReference>
<dbReference type="CDD" id="cd02440">
    <property type="entry name" value="AdoMet_MTases"/>
    <property type="match status" value="1"/>
</dbReference>
<dbReference type="Gene3D" id="1.10.150.290">
    <property type="entry name" value="S-adenosyl-L-methionine-dependent methyltransferases"/>
    <property type="match status" value="1"/>
</dbReference>
<dbReference type="Gene3D" id="3.40.50.150">
    <property type="entry name" value="Vaccinia Virus protein VP39"/>
    <property type="match status" value="1"/>
</dbReference>
<dbReference type="HAMAP" id="MF_00560">
    <property type="entry name" value="Tran_acon_Me_trans"/>
    <property type="match status" value="1"/>
</dbReference>
<dbReference type="InterPro" id="IPR041698">
    <property type="entry name" value="Methyltransf_25"/>
</dbReference>
<dbReference type="InterPro" id="IPR029063">
    <property type="entry name" value="SAM-dependent_MTases_sf"/>
</dbReference>
<dbReference type="InterPro" id="IPR023506">
    <property type="entry name" value="Trans-aconitate_MeTrfase"/>
</dbReference>
<dbReference type="InterPro" id="IPR023149">
    <property type="entry name" value="Trans_acon_MeTrfase_C"/>
</dbReference>
<dbReference type="NCBIfam" id="NF002463">
    <property type="entry name" value="PRK01683.1"/>
    <property type="match status" value="1"/>
</dbReference>
<dbReference type="PANTHER" id="PTHR43861:SF1">
    <property type="entry name" value="TRANS-ACONITATE 2-METHYLTRANSFERASE"/>
    <property type="match status" value="1"/>
</dbReference>
<dbReference type="PANTHER" id="PTHR43861">
    <property type="entry name" value="TRANS-ACONITATE 2-METHYLTRANSFERASE-RELATED"/>
    <property type="match status" value="1"/>
</dbReference>
<dbReference type="Pfam" id="PF13649">
    <property type="entry name" value="Methyltransf_25"/>
    <property type="match status" value="1"/>
</dbReference>
<dbReference type="SUPFAM" id="SSF53335">
    <property type="entry name" value="S-adenosyl-L-methionine-dependent methyltransferases"/>
    <property type="match status" value="1"/>
</dbReference>
<reference key="1">
    <citation type="journal article" date="2006" name="BMC Genomics">
        <title>Complete genome sequence of Shigella flexneri 5b and comparison with Shigella flexneri 2a.</title>
        <authorList>
            <person name="Nie H."/>
            <person name="Yang F."/>
            <person name="Zhang X."/>
            <person name="Yang J."/>
            <person name="Chen L."/>
            <person name="Wang J."/>
            <person name="Xiong Z."/>
            <person name="Peng J."/>
            <person name="Sun L."/>
            <person name="Dong J."/>
            <person name="Xue Y."/>
            <person name="Xu X."/>
            <person name="Chen S."/>
            <person name="Yao Z."/>
            <person name="Shen Y."/>
            <person name="Jin Q."/>
        </authorList>
    </citation>
    <scope>NUCLEOTIDE SEQUENCE [LARGE SCALE GENOMIC DNA]</scope>
    <source>
        <strain>8401</strain>
    </source>
</reference>
<comment type="function">
    <text evidence="1">Catalyzes the S-adenosylmethionine monomethyl esterification of trans-aconitate.</text>
</comment>
<comment type="catalytic activity">
    <reaction evidence="1">
        <text>trans-aconitate + S-adenosyl-L-methionine = (E)-3-(methoxycarbonyl)pent-2-enedioate + S-adenosyl-L-homocysteine</text>
        <dbReference type="Rhea" id="RHEA:14969"/>
        <dbReference type="ChEBI" id="CHEBI:15708"/>
        <dbReference type="ChEBI" id="CHEBI:57470"/>
        <dbReference type="ChEBI" id="CHEBI:57856"/>
        <dbReference type="ChEBI" id="CHEBI:59789"/>
        <dbReference type="EC" id="2.1.1.144"/>
    </reaction>
</comment>
<comment type="subcellular location">
    <subcellularLocation>
        <location evidence="1">Cytoplasm</location>
    </subcellularLocation>
</comment>
<comment type="similarity">
    <text evidence="1">Belongs to the methyltransferase superfamily. Tam family.</text>
</comment>
<feature type="chain" id="PRO_1000056581" description="Trans-aconitate 2-methyltransferase">
    <location>
        <begin position="1"/>
        <end position="252"/>
    </location>
</feature>
<gene>
    <name evidence="1" type="primary">tam</name>
    <name type="ordered locus">SFV_1576</name>
</gene>
<protein>
    <recommendedName>
        <fullName evidence="1">Trans-aconitate 2-methyltransferase</fullName>
        <ecNumber evidence="1">2.1.1.144</ecNumber>
    </recommendedName>
</protein>
<evidence type="ECO:0000255" key="1">
    <source>
        <dbReference type="HAMAP-Rule" id="MF_00560"/>
    </source>
</evidence>
<accession>Q0T4L2</accession>
<keyword id="KW-0963">Cytoplasm</keyword>
<keyword id="KW-0489">Methyltransferase</keyword>
<keyword id="KW-0949">S-adenosyl-L-methionine</keyword>
<keyword id="KW-0808">Transferase</keyword>